<keyword id="KW-0249">Electron transport</keyword>
<keyword id="KW-0349">Heme</keyword>
<keyword id="KW-0408">Iron</keyword>
<keyword id="KW-0472">Membrane</keyword>
<keyword id="KW-0479">Metal-binding</keyword>
<keyword id="KW-0496">Mitochondrion</keyword>
<keyword id="KW-0999">Mitochondrion inner membrane</keyword>
<keyword id="KW-0679">Respiratory chain</keyword>
<keyword id="KW-0812">Transmembrane</keyword>
<keyword id="KW-1133">Transmembrane helix</keyword>
<keyword id="KW-0813">Transport</keyword>
<keyword id="KW-0830">Ubiquinone</keyword>
<organism>
    <name type="scientific">Spermophilus variegatus</name>
    <name type="common">Rock squirrel</name>
    <dbReference type="NCBI Taxonomy" id="45472"/>
    <lineage>
        <taxon>Eukaryota</taxon>
        <taxon>Metazoa</taxon>
        <taxon>Chordata</taxon>
        <taxon>Craniata</taxon>
        <taxon>Vertebrata</taxon>
        <taxon>Euteleostomi</taxon>
        <taxon>Mammalia</taxon>
        <taxon>Eutheria</taxon>
        <taxon>Euarchontoglires</taxon>
        <taxon>Glires</taxon>
        <taxon>Rodentia</taxon>
        <taxon>Sciuromorpha</taxon>
        <taxon>Sciuridae</taxon>
        <taxon>Xerinae</taxon>
        <taxon>Marmotini</taxon>
        <taxon>Otospermophilus</taxon>
    </lineage>
</organism>
<accession>Q9TF86</accession>
<name>CYB_SPEVA</name>
<sequence>MTNIRKTHPLMKIINHSFIDLPTPSNISTWWNFGSLLGLCLTIQILTGLFLAMHYTPDTVTAFSSVTHICRDVNYGWLIRYIHANSASMFFICLFLHVGRGLYYGSYIYFETWNIGIILLFVVMATAFMGYVLPWGQMSFWGATVITNLLSAIPYIGTTLVEWIWGGFSVDKATLTRFFAFHFILPFIITALVMIHLLFLHETGSNNPSGLVSDSDKIPFHPYYTIKDILGALLLILVLMILVLFSPDLLGDPDNYTPANPLSTPPHIKPEWYFLFAYAILRSIPNKLGGVLALVSSILILLIFPLLHLSKQRSMMFRPLSQLMFWVLVADLLTLTWIGGQPVEYPFITIGQLASILYFTIILLILPAVSLIENKLLKW</sequence>
<dbReference type="EMBL" id="AF157854">
    <property type="protein sequence ID" value="AAD50138.1"/>
    <property type="molecule type" value="Genomic_DNA"/>
</dbReference>
<dbReference type="SMR" id="Q9TF86"/>
<dbReference type="GO" id="GO:0005743">
    <property type="term" value="C:mitochondrial inner membrane"/>
    <property type="evidence" value="ECO:0007669"/>
    <property type="project" value="UniProtKB-SubCell"/>
</dbReference>
<dbReference type="GO" id="GO:0045275">
    <property type="term" value="C:respiratory chain complex III"/>
    <property type="evidence" value="ECO:0007669"/>
    <property type="project" value="InterPro"/>
</dbReference>
<dbReference type="GO" id="GO:0046872">
    <property type="term" value="F:metal ion binding"/>
    <property type="evidence" value="ECO:0007669"/>
    <property type="project" value="UniProtKB-KW"/>
</dbReference>
<dbReference type="GO" id="GO:0008121">
    <property type="term" value="F:ubiquinol-cytochrome-c reductase activity"/>
    <property type="evidence" value="ECO:0007669"/>
    <property type="project" value="InterPro"/>
</dbReference>
<dbReference type="GO" id="GO:0006122">
    <property type="term" value="P:mitochondrial electron transport, ubiquinol to cytochrome c"/>
    <property type="evidence" value="ECO:0007669"/>
    <property type="project" value="TreeGrafter"/>
</dbReference>
<dbReference type="CDD" id="cd00290">
    <property type="entry name" value="cytochrome_b_C"/>
    <property type="match status" value="1"/>
</dbReference>
<dbReference type="CDD" id="cd00284">
    <property type="entry name" value="Cytochrome_b_N"/>
    <property type="match status" value="1"/>
</dbReference>
<dbReference type="FunFam" id="1.20.810.10:FF:000002">
    <property type="entry name" value="Cytochrome b"/>
    <property type="match status" value="1"/>
</dbReference>
<dbReference type="Gene3D" id="1.20.810.10">
    <property type="entry name" value="Cytochrome Bc1 Complex, Chain C"/>
    <property type="match status" value="1"/>
</dbReference>
<dbReference type="InterPro" id="IPR005798">
    <property type="entry name" value="Cyt_b/b6_C"/>
</dbReference>
<dbReference type="InterPro" id="IPR036150">
    <property type="entry name" value="Cyt_b/b6_C_sf"/>
</dbReference>
<dbReference type="InterPro" id="IPR005797">
    <property type="entry name" value="Cyt_b/b6_N"/>
</dbReference>
<dbReference type="InterPro" id="IPR027387">
    <property type="entry name" value="Cytb/b6-like_sf"/>
</dbReference>
<dbReference type="InterPro" id="IPR030689">
    <property type="entry name" value="Cytochrome_b"/>
</dbReference>
<dbReference type="InterPro" id="IPR048260">
    <property type="entry name" value="Cytochrome_b_C_euk/bac"/>
</dbReference>
<dbReference type="InterPro" id="IPR048259">
    <property type="entry name" value="Cytochrome_b_N_euk/bac"/>
</dbReference>
<dbReference type="InterPro" id="IPR016174">
    <property type="entry name" value="Di-haem_cyt_TM"/>
</dbReference>
<dbReference type="PANTHER" id="PTHR19271">
    <property type="entry name" value="CYTOCHROME B"/>
    <property type="match status" value="1"/>
</dbReference>
<dbReference type="PANTHER" id="PTHR19271:SF16">
    <property type="entry name" value="CYTOCHROME B"/>
    <property type="match status" value="1"/>
</dbReference>
<dbReference type="Pfam" id="PF00032">
    <property type="entry name" value="Cytochrom_B_C"/>
    <property type="match status" value="1"/>
</dbReference>
<dbReference type="Pfam" id="PF00033">
    <property type="entry name" value="Cytochrome_B"/>
    <property type="match status" value="1"/>
</dbReference>
<dbReference type="PIRSF" id="PIRSF038885">
    <property type="entry name" value="COB"/>
    <property type="match status" value="1"/>
</dbReference>
<dbReference type="SUPFAM" id="SSF81648">
    <property type="entry name" value="a domain/subunit of cytochrome bc1 complex (Ubiquinol-cytochrome c reductase)"/>
    <property type="match status" value="1"/>
</dbReference>
<dbReference type="SUPFAM" id="SSF81342">
    <property type="entry name" value="Transmembrane di-heme cytochromes"/>
    <property type="match status" value="1"/>
</dbReference>
<dbReference type="PROSITE" id="PS51003">
    <property type="entry name" value="CYTB_CTER"/>
    <property type="match status" value="1"/>
</dbReference>
<dbReference type="PROSITE" id="PS51002">
    <property type="entry name" value="CYTB_NTER"/>
    <property type="match status" value="1"/>
</dbReference>
<reference key="1">
    <citation type="journal article" date="2003" name="J. Mammal. Evol.">
        <title>Phylogeny and evolutionary history of the ground squirrels (Rodentia: Marmotinae).</title>
        <authorList>
            <person name="Harrison R.G."/>
            <person name="Bogdanowicz S.M."/>
            <person name="Hoffmann R.S."/>
            <person name="Yensen E."/>
            <person name="Sherman P.W."/>
        </authorList>
    </citation>
    <scope>NUCLEOTIDE SEQUENCE [GENOMIC DNA]</scope>
</reference>
<protein>
    <recommendedName>
        <fullName>Cytochrome b</fullName>
    </recommendedName>
    <alternativeName>
        <fullName>Complex III subunit 3</fullName>
    </alternativeName>
    <alternativeName>
        <fullName>Complex III subunit III</fullName>
    </alternativeName>
    <alternativeName>
        <fullName>Cytochrome b-c1 complex subunit 3</fullName>
    </alternativeName>
    <alternativeName>
        <fullName>Ubiquinol-cytochrome-c reductase complex cytochrome b subunit</fullName>
    </alternativeName>
</protein>
<evidence type="ECO:0000250" key="1"/>
<evidence type="ECO:0000250" key="2">
    <source>
        <dbReference type="UniProtKB" id="P00157"/>
    </source>
</evidence>
<evidence type="ECO:0000255" key="3">
    <source>
        <dbReference type="PROSITE-ProRule" id="PRU00967"/>
    </source>
</evidence>
<evidence type="ECO:0000255" key="4">
    <source>
        <dbReference type="PROSITE-ProRule" id="PRU00968"/>
    </source>
</evidence>
<proteinExistence type="inferred from homology"/>
<comment type="function">
    <text evidence="2">Component of the ubiquinol-cytochrome c reductase complex (complex III or cytochrome b-c1 complex) that is part of the mitochondrial respiratory chain. The b-c1 complex mediates electron transfer from ubiquinol to cytochrome c. Contributes to the generation of a proton gradient across the mitochondrial membrane that is then used for ATP synthesis.</text>
</comment>
<comment type="cofactor">
    <cofactor evidence="2">
        <name>heme b</name>
        <dbReference type="ChEBI" id="CHEBI:60344"/>
    </cofactor>
    <text evidence="2">Binds 2 heme b groups non-covalently.</text>
</comment>
<comment type="subunit">
    <text evidence="2">The cytochrome bc1 complex contains 11 subunits: 3 respiratory subunits (MT-CYB, CYC1 and UQCRFS1), 2 core proteins (UQCRC1 and UQCRC2) and 6 low-molecular weight proteins (UQCRH/QCR6, UQCRB/QCR7, UQCRQ/QCR8, UQCR10/QCR9, UQCR11/QCR10 and a cleavage product of UQCRFS1). This cytochrome bc1 complex then forms a dimer.</text>
</comment>
<comment type="subcellular location">
    <subcellularLocation>
        <location evidence="2">Mitochondrion inner membrane</location>
        <topology evidence="2">Multi-pass membrane protein</topology>
    </subcellularLocation>
</comment>
<comment type="miscellaneous">
    <text evidence="1">Heme 1 (or BL or b562) is low-potential and absorbs at about 562 nm, and heme 2 (or BH or b566) is high-potential and absorbs at about 566 nm.</text>
</comment>
<comment type="similarity">
    <text evidence="3 4">Belongs to the cytochrome b family.</text>
</comment>
<comment type="caution">
    <text evidence="2">The full-length protein contains only eight transmembrane helices, not nine as predicted by bioinformatics tools.</text>
</comment>
<gene>
    <name type="primary">MT-CYB</name>
    <name type="synonym">COB</name>
    <name type="synonym">CYTB</name>
    <name type="synonym">MTCYB</name>
</gene>
<geneLocation type="mitochondrion"/>
<feature type="chain" id="PRO_0000255143" description="Cytochrome b">
    <location>
        <begin position="1"/>
        <end position="379"/>
    </location>
</feature>
<feature type="transmembrane region" description="Helical" evidence="2">
    <location>
        <begin position="33"/>
        <end position="53"/>
    </location>
</feature>
<feature type="transmembrane region" description="Helical" evidence="2">
    <location>
        <begin position="77"/>
        <end position="98"/>
    </location>
</feature>
<feature type="transmembrane region" description="Helical" evidence="2">
    <location>
        <begin position="113"/>
        <end position="133"/>
    </location>
</feature>
<feature type="transmembrane region" description="Helical" evidence="2">
    <location>
        <begin position="178"/>
        <end position="198"/>
    </location>
</feature>
<feature type="transmembrane region" description="Helical" evidence="2">
    <location>
        <begin position="226"/>
        <end position="246"/>
    </location>
</feature>
<feature type="transmembrane region" description="Helical" evidence="2">
    <location>
        <begin position="288"/>
        <end position="308"/>
    </location>
</feature>
<feature type="transmembrane region" description="Helical" evidence="2">
    <location>
        <begin position="320"/>
        <end position="340"/>
    </location>
</feature>
<feature type="transmembrane region" description="Helical" evidence="2">
    <location>
        <begin position="347"/>
        <end position="367"/>
    </location>
</feature>
<feature type="binding site" description="axial binding residue" evidence="2">
    <location>
        <position position="83"/>
    </location>
    <ligand>
        <name>heme b</name>
        <dbReference type="ChEBI" id="CHEBI:60344"/>
        <label>b562</label>
    </ligand>
    <ligandPart>
        <name>Fe</name>
        <dbReference type="ChEBI" id="CHEBI:18248"/>
    </ligandPart>
</feature>
<feature type="binding site" description="axial binding residue" evidence="2">
    <location>
        <position position="97"/>
    </location>
    <ligand>
        <name>heme b</name>
        <dbReference type="ChEBI" id="CHEBI:60344"/>
        <label>b566</label>
    </ligand>
    <ligandPart>
        <name>Fe</name>
        <dbReference type="ChEBI" id="CHEBI:18248"/>
    </ligandPart>
</feature>
<feature type="binding site" description="axial binding residue" evidence="2">
    <location>
        <position position="182"/>
    </location>
    <ligand>
        <name>heme b</name>
        <dbReference type="ChEBI" id="CHEBI:60344"/>
        <label>b562</label>
    </ligand>
    <ligandPart>
        <name>Fe</name>
        <dbReference type="ChEBI" id="CHEBI:18248"/>
    </ligandPart>
</feature>
<feature type="binding site" description="axial binding residue" evidence="2">
    <location>
        <position position="196"/>
    </location>
    <ligand>
        <name>heme b</name>
        <dbReference type="ChEBI" id="CHEBI:60344"/>
        <label>b566</label>
    </ligand>
    <ligandPart>
        <name>Fe</name>
        <dbReference type="ChEBI" id="CHEBI:18248"/>
    </ligandPart>
</feature>
<feature type="binding site" evidence="2">
    <location>
        <position position="201"/>
    </location>
    <ligand>
        <name>a ubiquinone</name>
        <dbReference type="ChEBI" id="CHEBI:16389"/>
    </ligand>
</feature>